<name>CBID_CLOBJ</name>
<keyword id="KW-0169">Cobalamin biosynthesis</keyword>
<keyword id="KW-0489">Methyltransferase</keyword>
<keyword id="KW-0949">S-adenosyl-L-methionine</keyword>
<keyword id="KW-0808">Transferase</keyword>
<feature type="chain" id="PRO_1000148476" description="Cobalt-precorrin-5B C(1)-methyltransferase">
    <location>
        <begin position="1"/>
        <end position="359"/>
    </location>
</feature>
<gene>
    <name evidence="1" type="primary">cbiD</name>
    <name type="ordered locus">CLM_1086</name>
</gene>
<reference key="1">
    <citation type="submission" date="2008-10" db="EMBL/GenBank/DDBJ databases">
        <title>Genome sequence of Clostridium botulinum A2 Kyoto.</title>
        <authorList>
            <person name="Shrivastava S."/>
            <person name="Brinkac L.M."/>
            <person name="Brown J.L."/>
            <person name="Bruce D."/>
            <person name="Detter C.C."/>
            <person name="Johnson E.A."/>
            <person name="Munk C.A."/>
            <person name="Smith L.A."/>
            <person name="Smith T.J."/>
            <person name="Sutton G."/>
            <person name="Brettin T.S."/>
        </authorList>
    </citation>
    <scope>NUCLEOTIDE SEQUENCE [LARGE SCALE GENOMIC DNA]</scope>
    <source>
        <strain>Kyoto / Type A2</strain>
    </source>
</reference>
<comment type="function">
    <text evidence="1">Catalyzes the methylation of C-1 in cobalt-precorrin-5B to form cobalt-precorrin-6A.</text>
</comment>
<comment type="catalytic activity">
    <reaction evidence="1">
        <text>Co-precorrin-5B + S-adenosyl-L-methionine = Co-precorrin-6A + S-adenosyl-L-homocysteine</text>
        <dbReference type="Rhea" id="RHEA:26285"/>
        <dbReference type="ChEBI" id="CHEBI:57856"/>
        <dbReference type="ChEBI" id="CHEBI:59789"/>
        <dbReference type="ChEBI" id="CHEBI:60063"/>
        <dbReference type="ChEBI" id="CHEBI:60064"/>
        <dbReference type="EC" id="2.1.1.195"/>
    </reaction>
</comment>
<comment type="pathway">
    <text evidence="1">Cofactor biosynthesis; adenosylcobalamin biosynthesis; cob(II)yrinate a,c-diamide from sirohydrochlorin (anaerobic route): step 6/10.</text>
</comment>
<comment type="similarity">
    <text evidence="1">Belongs to the CbiD family.</text>
</comment>
<sequence length="359" mass="39511">MLDLYVNCDGKKLRCGYTTGSCAAAAAKAAAITLFYNKKLKEINIDTPKGIELTIPIEKIVEDENFIECAVIKDGGDDVDITHGIEIWARAKKKPIGYTLKGGKGVGVVCGEGLYVPKGEPAINPVPRSMIEKEVRSVIPRDSGVEITIFVPKGEEIAKKTFNPRLNIIRGISILGTTGIVMPMSEDALKASIELEINQKTCHGEKELILLFGNMGEKMAKELNLKENNMVIMSNYVGFALNCCMARKLEKITIVGHIGKISKIASGCFNTHSRICDTRLEILALELALMGYDKDLVTKIYNQKTTEGAVNLLGEGYEKLYKNLGKKIIRKIEQYAYDSIKADVVMYSMGRGVLYSSIE</sequence>
<accession>C1FVD5</accession>
<evidence type="ECO:0000255" key="1">
    <source>
        <dbReference type="HAMAP-Rule" id="MF_00787"/>
    </source>
</evidence>
<dbReference type="EC" id="2.1.1.195" evidence="1"/>
<dbReference type="EMBL" id="CP001581">
    <property type="protein sequence ID" value="ACO87177.1"/>
    <property type="molecule type" value="Genomic_DNA"/>
</dbReference>
<dbReference type="RefSeq" id="WP_012705724.1">
    <property type="nucleotide sequence ID" value="NC_012563.1"/>
</dbReference>
<dbReference type="SMR" id="C1FVD5"/>
<dbReference type="KEGG" id="cby:CLM_1086"/>
<dbReference type="eggNOG" id="COG1903">
    <property type="taxonomic scope" value="Bacteria"/>
</dbReference>
<dbReference type="HOGENOM" id="CLU_041273_1_0_9"/>
<dbReference type="UniPathway" id="UPA00148">
    <property type="reaction ID" value="UER00227"/>
</dbReference>
<dbReference type="Proteomes" id="UP000001374">
    <property type="component" value="Chromosome"/>
</dbReference>
<dbReference type="GO" id="GO:0043780">
    <property type="term" value="F:cobalt-precorrin-5B C1-methyltransferase activity"/>
    <property type="evidence" value="ECO:0007669"/>
    <property type="project" value="RHEA"/>
</dbReference>
<dbReference type="GO" id="GO:0019251">
    <property type="term" value="P:anaerobic cobalamin biosynthetic process"/>
    <property type="evidence" value="ECO:0007669"/>
    <property type="project" value="UniProtKB-UniRule"/>
</dbReference>
<dbReference type="GO" id="GO:0032259">
    <property type="term" value="P:methylation"/>
    <property type="evidence" value="ECO:0007669"/>
    <property type="project" value="UniProtKB-KW"/>
</dbReference>
<dbReference type="Gene3D" id="3.30.2110.10">
    <property type="entry name" value="CbiD-like"/>
    <property type="match status" value="1"/>
</dbReference>
<dbReference type="HAMAP" id="MF_00787">
    <property type="entry name" value="CbiD"/>
    <property type="match status" value="1"/>
</dbReference>
<dbReference type="InterPro" id="IPR002748">
    <property type="entry name" value="CbiD"/>
</dbReference>
<dbReference type="InterPro" id="IPR036074">
    <property type="entry name" value="CbiD_sf"/>
</dbReference>
<dbReference type="NCBIfam" id="TIGR00312">
    <property type="entry name" value="cbiD"/>
    <property type="match status" value="1"/>
</dbReference>
<dbReference type="PANTHER" id="PTHR35863">
    <property type="entry name" value="COBALT-PRECORRIN-5B C(1)-METHYLTRANSFERASE"/>
    <property type="match status" value="1"/>
</dbReference>
<dbReference type="PANTHER" id="PTHR35863:SF1">
    <property type="entry name" value="COBALT-PRECORRIN-5B C(1)-METHYLTRANSFERASE"/>
    <property type="match status" value="1"/>
</dbReference>
<dbReference type="Pfam" id="PF01888">
    <property type="entry name" value="CbiD"/>
    <property type="match status" value="1"/>
</dbReference>
<dbReference type="PIRSF" id="PIRSF026782">
    <property type="entry name" value="CbiD"/>
    <property type="match status" value="1"/>
</dbReference>
<dbReference type="SUPFAM" id="SSF111342">
    <property type="entry name" value="CbiD-like"/>
    <property type="match status" value="1"/>
</dbReference>
<protein>
    <recommendedName>
        <fullName evidence="1">Cobalt-precorrin-5B C(1)-methyltransferase</fullName>
        <ecNumber evidence="1">2.1.1.195</ecNumber>
    </recommendedName>
    <alternativeName>
        <fullName evidence="1">Cobalt-precorrin-6A synthase</fullName>
    </alternativeName>
</protein>
<organism>
    <name type="scientific">Clostridium botulinum (strain Kyoto / Type A2)</name>
    <dbReference type="NCBI Taxonomy" id="536232"/>
    <lineage>
        <taxon>Bacteria</taxon>
        <taxon>Bacillati</taxon>
        <taxon>Bacillota</taxon>
        <taxon>Clostridia</taxon>
        <taxon>Eubacteriales</taxon>
        <taxon>Clostridiaceae</taxon>
        <taxon>Clostridium</taxon>
    </lineage>
</organism>
<proteinExistence type="inferred from homology"/>